<reference key="1">
    <citation type="submission" date="2009-01" db="EMBL/GenBank/DDBJ databases">
        <title>Complete sequence of Chloroflexus sp. Y-400-fl.</title>
        <authorList>
            <consortium name="US DOE Joint Genome Institute"/>
            <person name="Lucas S."/>
            <person name="Copeland A."/>
            <person name="Lapidus A."/>
            <person name="Glavina del Rio T."/>
            <person name="Dalin E."/>
            <person name="Tice H."/>
            <person name="Bruce D."/>
            <person name="Goodwin L."/>
            <person name="Pitluck S."/>
            <person name="Sims D."/>
            <person name="Kiss H."/>
            <person name="Brettin T."/>
            <person name="Detter J.C."/>
            <person name="Han C."/>
            <person name="Larimer F."/>
            <person name="Land M."/>
            <person name="Hauser L."/>
            <person name="Kyrpides N."/>
            <person name="Ovchinnikova G."/>
            <person name="Bryant D.A."/>
            <person name="Richardson P."/>
        </authorList>
    </citation>
    <scope>NUCLEOTIDE SEQUENCE [LARGE SCALE GENOMIC DNA]</scope>
    <source>
        <strain>ATCC 29364 / DSM 637 / Y-400-fl</strain>
    </source>
</reference>
<accession>B9LH09</accession>
<gene>
    <name evidence="1" type="primary">rpsP</name>
    <name type="ordered locus">Chy400_2214</name>
</gene>
<keyword id="KW-0687">Ribonucleoprotein</keyword>
<keyword id="KW-0689">Ribosomal protein</keyword>
<organism>
    <name type="scientific">Chloroflexus aurantiacus (strain ATCC 29364 / DSM 637 / Y-400-fl)</name>
    <dbReference type="NCBI Taxonomy" id="480224"/>
    <lineage>
        <taxon>Bacteria</taxon>
        <taxon>Bacillati</taxon>
        <taxon>Chloroflexota</taxon>
        <taxon>Chloroflexia</taxon>
        <taxon>Chloroflexales</taxon>
        <taxon>Chloroflexineae</taxon>
        <taxon>Chloroflexaceae</taxon>
        <taxon>Chloroflexus</taxon>
    </lineage>
</organism>
<dbReference type="EMBL" id="CP001364">
    <property type="protein sequence ID" value="ACM53611.1"/>
    <property type="molecule type" value="Genomic_DNA"/>
</dbReference>
<dbReference type="SMR" id="B9LH09"/>
<dbReference type="KEGG" id="chl:Chy400_2214"/>
<dbReference type="HOGENOM" id="CLU_100590_5_2_0"/>
<dbReference type="OrthoDB" id="9807878at2"/>
<dbReference type="GO" id="GO:0005737">
    <property type="term" value="C:cytoplasm"/>
    <property type="evidence" value="ECO:0007669"/>
    <property type="project" value="UniProtKB-ARBA"/>
</dbReference>
<dbReference type="GO" id="GO:0015935">
    <property type="term" value="C:small ribosomal subunit"/>
    <property type="evidence" value="ECO:0007669"/>
    <property type="project" value="TreeGrafter"/>
</dbReference>
<dbReference type="GO" id="GO:0003735">
    <property type="term" value="F:structural constituent of ribosome"/>
    <property type="evidence" value="ECO:0007669"/>
    <property type="project" value="InterPro"/>
</dbReference>
<dbReference type="GO" id="GO:0006412">
    <property type="term" value="P:translation"/>
    <property type="evidence" value="ECO:0007669"/>
    <property type="project" value="UniProtKB-UniRule"/>
</dbReference>
<dbReference type="FunFam" id="3.30.1320.10:FF:000018">
    <property type="entry name" value="30S ribosomal protein S16"/>
    <property type="match status" value="1"/>
</dbReference>
<dbReference type="Gene3D" id="3.30.1320.10">
    <property type="match status" value="1"/>
</dbReference>
<dbReference type="HAMAP" id="MF_00385">
    <property type="entry name" value="Ribosomal_bS16"/>
    <property type="match status" value="1"/>
</dbReference>
<dbReference type="InterPro" id="IPR000307">
    <property type="entry name" value="Ribosomal_bS16"/>
</dbReference>
<dbReference type="InterPro" id="IPR023803">
    <property type="entry name" value="Ribosomal_bS16_dom_sf"/>
</dbReference>
<dbReference type="NCBIfam" id="TIGR00002">
    <property type="entry name" value="S16"/>
    <property type="match status" value="1"/>
</dbReference>
<dbReference type="PANTHER" id="PTHR12919">
    <property type="entry name" value="30S RIBOSOMAL PROTEIN S16"/>
    <property type="match status" value="1"/>
</dbReference>
<dbReference type="PANTHER" id="PTHR12919:SF20">
    <property type="entry name" value="SMALL RIBOSOMAL SUBUNIT PROTEIN BS16M"/>
    <property type="match status" value="1"/>
</dbReference>
<dbReference type="Pfam" id="PF00886">
    <property type="entry name" value="Ribosomal_S16"/>
    <property type="match status" value="1"/>
</dbReference>
<dbReference type="SUPFAM" id="SSF54565">
    <property type="entry name" value="Ribosomal protein S16"/>
    <property type="match status" value="1"/>
</dbReference>
<comment type="similarity">
    <text evidence="1">Belongs to the bacterial ribosomal protein bS16 family.</text>
</comment>
<sequence>MVKIRLRRTGKTKQPSYRIVVADSRSPRDGKFIETIGYYLPTRQPKVLEIKADRARYWLGVGAQPTEVVVKLLKRVNVLDEQGKVIAEA</sequence>
<protein>
    <recommendedName>
        <fullName evidence="1">Small ribosomal subunit protein bS16</fullName>
    </recommendedName>
    <alternativeName>
        <fullName evidence="2">30S ribosomal protein S16</fullName>
    </alternativeName>
</protein>
<evidence type="ECO:0000255" key="1">
    <source>
        <dbReference type="HAMAP-Rule" id="MF_00385"/>
    </source>
</evidence>
<evidence type="ECO:0000305" key="2"/>
<feature type="chain" id="PRO_1000196366" description="Small ribosomal subunit protein bS16">
    <location>
        <begin position="1"/>
        <end position="89"/>
    </location>
</feature>
<name>RS16_CHLSY</name>
<proteinExistence type="inferred from homology"/>